<protein>
    <recommendedName>
        <fullName evidence="1">Large ribosomal subunit protein uL6</fullName>
    </recommendedName>
    <alternativeName>
        <fullName evidence="2">50S ribosomal protein L6</fullName>
    </alternativeName>
</protein>
<sequence>MSRIGKQPVAIPSGVEVKLEGNLLKFKKGNLAKELDTKANVNVEIKEGQILFSPKGEDRQSRAYWGTYRALTQNIIIGLTDGFSKTLEINGVGYKAALKGKVLELALGFSHPINYAIPEGIEITVDKNNIIVKGSDKQVVGQVAAQIREFRPPEPYKGKGVKYSTERIIRKAGKTSKK</sequence>
<accession>B9KEF5</accession>
<reference key="1">
    <citation type="journal article" date="2008" name="Foodborne Pathog. Dis.">
        <title>The complete genome sequence and analysis of the human pathogen Campylobacter lari.</title>
        <authorList>
            <person name="Miller W.G."/>
            <person name="Wang G."/>
            <person name="Binnewies T.T."/>
            <person name="Parker C.T."/>
        </authorList>
    </citation>
    <scope>NUCLEOTIDE SEQUENCE [LARGE SCALE GENOMIC DNA]</scope>
    <source>
        <strain>RM2100 / D67 / ATCC BAA-1060</strain>
    </source>
</reference>
<name>RL6_CAMLR</name>
<feature type="chain" id="PRO_1000166795" description="Large ribosomal subunit protein uL6">
    <location>
        <begin position="1"/>
        <end position="178"/>
    </location>
</feature>
<organism>
    <name type="scientific">Campylobacter lari (strain RM2100 / D67 / ATCC BAA-1060)</name>
    <dbReference type="NCBI Taxonomy" id="306263"/>
    <lineage>
        <taxon>Bacteria</taxon>
        <taxon>Pseudomonadati</taxon>
        <taxon>Campylobacterota</taxon>
        <taxon>Epsilonproteobacteria</taxon>
        <taxon>Campylobacterales</taxon>
        <taxon>Campylobacteraceae</taxon>
        <taxon>Campylobacter</taxon>
    </lineage>
</organism>
<dbReference type="EMBL" id="CP000932">
    <property type="protein sequence ID" value="ACM63440.1"/>
    <property type="molecule type" value="Genomic_DNA"/>
</dbReference>
<dbReference type="RefSeq" id="WP_012660826.1">
    <property type="nucleotide sequence ID" value="NC_012039.1"/>
</dbReference>
<dbReference type="SMR" id="B9KEF5"/>
<dbReference type="STRING" id="306263.Cla_0074"/>
<dbReference type="KEGG" id="cla:CLA_0074"/>
<dbReference type="PATRIC" id="fig|306263.5.peg.73"/>
<dbReference type="eggNOG" id="COG0097">
    <property type="taxonomic scope" value="Bacteria"/>
</dbReference>
<dbReference type="HOGENOM" id="CLU_065464_1_2_7"/>
<dbReference type="Proteomes" id="UP000007727">
    <property type="component" value="Chromosome"/>
</dbReference>
<dbReference type="GO" id="GO:0022625">
    <property type="term" value="C:cytosolic large ribosomal subunit"/>
    <property type="evidence" value="ECO:0007669"/>
    <property type="project" value="TreeGrafter"/>
</dbReference>
<dbReference type="GO" id="GO:0019843">
    <property type="term" value="F:rRNA binding"/>
    <property type="evidence" value="ECO:0007669"/>
    <property type="project" value="UniProtKB-UniRule"/>
</dbReference>
<dbReference type="GO" id="GO:0003735">
    <property type="term" value="F:structural constituent of ribosome"/>
    <property type="evidence" value="ECO:0007669"/>
    <property type="project" value="InterPro"/>
</dbReference>
<dbReference type="GO" id="GO:0002181">
    <property type="term" value="P:cytoplasmic translation"/>
    <property type="evidence" value="ECO:0007669"/>
    <property type="project" value="TreeGrafter"/>
</dbReference>
<dbReference type="FunFam" id="3.90.930.12:FF:000001">
    <property type="entry name" value="50S ribosomal protein L6"/>
    <property type="match status" value="1"/>
</dbReference>
<dbReference type="Gene3D" id="3.90.930.12">
    <property type="entry name" value="Ribosomal protein L6, alpha-beta domain"/>
    <property type="match status" value="2"/>
</dbReference>
<dbReference type="HAMAP" id="MF_01365_B">
    <property type="entry name" value="Ribosomal_uL6_B"/>
    <property type="match status" value="1"/>
</dbReference>
<dbReference type="InterPro" id="IPR000702">
    <property type="entry name" value="Ribosomal_uL6-like"/>
</dbReference>
<dbReference type="InterPro" id="IPR036789">
    <property type="entry name" value="Ribosomal_uL6-like_a/b-dom_sf"/>
</dbReference>
<dbReference type="InterPro" id="IPR020040">
    <property type="entry name" value="Ribosomal_uL6_a/b-dom"/>
</dbReference>
<dbReference type="InterPro" id="IPR019906">
    <property type="entry name" value="Ribosomal_uL6_bac-type"/>
</dbReference>
<dbReference type="InterPro" id="IPR002358">
    <property type="entry name" value="Ribosomal_uL6_CS"/>
</dbReference>
<dbReference type="NCBIfam" id="TIGR03654">
    <property type="entry name" value="L6_bact"/>
    <property type="match status" value="1"/>
</dbReference>
<dbReference type="PANTHER" id="PTHR11655">
    <property type="entry name" value="60S/50S RIBOSOMAL PROTEIN L6/L9"/>
    <property type="match status" value="1"/>
</dbReference>
<dbReference type="PANTHER" id="PTHR11655:SF14">
    <property type="entry name" value="LARGE RIBOSOMAL SUBUNIT PROTEIN UL6M"/>
    <property type="match status" value="1"/>
</dbReference>
<dbReference type="Pfam" id="PF00347">
    <property type="entry name" value="Ribosomal_L6"/>
    <property type="match status" value="2"/>
</dbReference>
<dbReference type="PIRSF" id="PIRSF002162">
    <property type="entry name" value="Ribosomal_L6"/>
    <property type="match status" value="1"/>
</dbReference>
<dbReference type="PRINTS" id="PR00059">
    <property type="entry name" value="RIBOSOMALL6"/>
</dbReference>
<dbReference type="SUPFAM" id="SSF56053">
    <property type="entry name" value="Ribosomal protein L6"/>
    <property type="match status" value="2"/>
</dbReference>
<dbReference type="PROSITE" id="PS00525">
    <property type="entry name" value="RIBOSOMAL_L6_1"/>
    <property type="match status" value="1"/>
</dbReference>
<proteinExistence type="inferred from homology"/>
<evidence type="ECO:0000255" key="1">
    <source>
        <dbReference type="HAMAP-Rule" id="MF_01365"/>
    </source>
</evidence>
<evidence type="ECO:0000305" key="2"/>
<gene>
    <name evidence="1" type="primary">rplF</name>
    <name type="ordered locus">Cla_0074</name>
</gene>
<comment type="function">
    <text evidence="1">This protein binds to the 23S rRNA, and is important in its secondary structure. It is located near the subunit interface in the base of the L7/L12 stalk, and near the tRNA binding site of the peptidyltransferase center.</text>
</comment>
<comment type="subunit">
    <text evidence="1">Part of the 50S ribosomal subunit.</text>
</comment>
<comment type="similarity">
    <text evidence="1">Belongs to the universal ribosomal protein uL6 family.</text>
</comment>
<keyword id="KW-1185">Reference proteome</keyword>
<keyword id="KW-0687">Ribonucleoprotein</keyword>
<keyword id="KW-0689">Ribosomal protein</keyword>
<keyword id="KW-0694">RNA-binding</keyword>
<keyword id="KW-0699">rRNA-binding</keyword>